<reference key="1">
    <citation type="journal article" date="2000" name="Mol. Cell. Biol.">
        <title>Human H/ACA small nucleolar RNPs and telomerase share evolutionarily conserved proteins NHP2 and NOP10.</title>
        <authorList>
            <person name="Pogacic V."/>
            <person name="Dragon F."/>
            <person name="Filipowicz W."/>
        </authorList>
    </citation>
    <scope>NUCLEOTIDE SEQUENCE [MRNA]</scope>
    <scope>INTERACTION WITH GAR1; SMALL NUCLEOLAR RNAS AND TERC</scope>
    <scope>SUBCELLULAR LOCATION</scope>
</reference>
<reference key="2">
    <citation type="journal article" date="2002" name="Biochim. Biophys. Acta">
        <title>Expression of the human homologue of the small nucleolar RNA-binding protein NHP2 gene during monocytic differentiation of U937 cells.</title>
        <authorList>
            <person name="Kang H.S."/>
            <person name="Jung H.M."/>
            <person name="Jun D."/>
            <person name="Huh T.L."/>
            <person name="Kim Y.H."/>
        </authorList>
    </citation>
    <scope>NUCLEOTIDE SEQUENCE [MRNA]</scope>
    <scope>TISSUE SPECIFICITY</scope>
    <scope>DEVELOPMENTAL STAGE</scope>
</reference>
<reference key="3">
    <citation type="journal article" date="2000" name="Genome Res.">
        <title>Cloning and functional analysis of cDNAs with open reading frames for 300 previously undefined genes expressed in CD34+ hematopoietic stem/progenitor cells.</title>
        <authorList>
            <person name="Zhang Q.-H."/>
            <person name="Ye M."/>
            <person name="Wu X.-Y."/>
            <person name="Ren S.-X."/>
            <person name="Zhao M."/>
            <person name="Zhao C.-J."/>
            <person name="Fu G."/>
            <person name="Shen Y."/>
            <person name="Fan H.-Y."/>
            <person name="Lu G."/>
            <person name="Zhong M."/>
            <person name="Xu X.-R."/>
            <person name="Han Z.-G."/>
            <person name="Zhang J.-W."/>
            <person name="Tao J."/>
            <person name="Huang Q.-H."/>
            <person name="Zhou J."/>
            <person name="Hu G.-X."/>
            <person name="Gu J."/>
            <person name="Chen S.-J."/>
            <person name="Chen Z."/>
        </authorList>
    </citation>
    <scope>NUCLEOTIDE SEQUENCE [LARGE SCALE MRNA]</scope>
    <source>
        <tissue>Umbilical cord blood</tissue>
    </source>
</reference>
<reference key="4">
    <citation type="journal article" date="2004" name="Nat. Genet.">
        <title>Complete sequencing and characterization of 21,243 full-length human cDNAs.</title>
        <authorList>
            <person name="Ota T."/>
            <person name="Suzuki Y."/>
            <person name="Nishikawa T."/>
            <person name="Otsuki T."/>
            <person name="Sugiyama T."/>
            <person name="Irie R."/>
            <person name="Wakamatsu A."/>
            <person name="Hayashi K."/>
            <person name="Sato H."/>
            <person name="Nagai K."/>
            <person name="Kimura K."/>
            <person name="Makita H."/>
            <person name="Sekine M."/>
            <person name="Obayashi M."/>
            <person name="Nishi T."/>
            <person name="Shibahara T."/>
            <person name="Tanaka T."/>
            <person name="Ishii S."/>
            <person name="Yamamoto J."/>
            <person name="Saito K."/>
            <person name="Kawai Y."/>
            <person name="Isono Y."/>
            <person name="Nakamura Y."/>
            <person name="Nagahari K."/>
            <person name="Murakami K."/>
            <person name="Yasuda T."/>
            <person name="Iwayanagi T."/>
            <person name="Wagatsuma M."/>
            <person name="Shiratori A."/>
            <person name="Sudo H."/>
            <person name="Hosoiri T."/>
            <person name="Kaku Y."/>
            <person name="Kodaira H."/>
            <person name="Kondo H."/>
            <person name="Sugawara M."/>
            <person name="Takahashi M."/>
            <person name="Kanda K."/>
            <person name="Yokoi T."/>
            <person name="Furuya T."/>
            <person name="Kikkawa E."/>
            <person name="Omura Y."/>
            <person name="Abe K."/>
            <person name="Kamihara K."/>
            <person name="Katsuta N."/>
            <person name="Sato K."/>
            <person name="Tanikawa M."/>
            <person name="Yamazaki M."/>
            <person name="Ninomiya K."/>
            <person name="Ishibashi T."/>
            <person name="Yamashita H."/>
            <person name="Murakawa K."/>
            <person name="Fujimori K."/>
            <person name="Tanai H."/>
            <person name="Kimata M."/>
            <person name="Watanabe M."/>
            <person name="Hiraoka S."/>
            <person name="Chiba Y."/>
            <person name="Ishida S."/>
            <person name="Ono Y."/>
            <person name="Takiguchi S."/>
            <person name="Watanabe S."/>
            <person name="Yosida M."/>
            <person name="Hotuta T."/>
            <person name="Kusano J."/>
            <person name="Kanehori K."/>
            <person name="Takahashi-Fujii A."/>
            <person name="Hara H."/>
            <person name="Tanase T.-O."/>
            <person name="Nomura Y."/>
            <person name="Togiya S."/>
            <person name="Komai F."/>
            <person name="Hara R."/>
            <person name="Takeuchi K."/>
            <person name="Arita M."/>
            <person name="Imose N."/>
            <person name="Musashino K."/>
            <person name="Yuuki H."/>
            <person name="Oshima A."/>
            <person name="Sasaki N."/>
            <person name="Aotsuka S."/>
            <person name="Yoshikawa Y."/>
            <person name="Matsunawa H."/>
            <person name="Ichihara T."/>
            <person name="Shiohata N."/>
            <person name="Sano S."/>
            <person name="Moriya S."/>
            <person name="Momiyama H."/>
            <person name="Satoh N."/>
            <person name="Takami S."/>
            <person name="Terashima Y."/>
            <person name="Suzuki O."/>
            <person name="Nakagawa S."/>
            <person name="Senoh A."/>
            <person name="Mizoguchi H."/>
            <person name="Goto Y."/>
            <person name="Shimizu F."/>
            <person name="Wakebe H."/>
            <person name="Hishigaki H."/>
            <person name="Watanabe T."/>
            <person name="Sugiyama A."/>
            <person name="Takemoto M."/>
            <person name="Kawakami B."/>
            <person name="Yamazaki M."/>
            <person name="Watanabe K."/>
            <person name="Kumagai A."/>
            <person name="Itakura S."/>
            <person name="Fukuzumi Y."/>
            <person name="Fujimori Y."/>
            <person name="Komiyama M."/>
            <person name="Tashiro H."/>
            <person name="Tanigami A."/>
            <person name="Fujiwara T."/>
            <person name="Ono T."/>
            <person name="Yamada K."/>
            <person name="Fujii Y."/>
            <person name="Ozaki K."/>
            <person name="Hirao M."/>
            <person name="Ohmori Y."/>
            <person name="Kawabata A."/>
            <person name="Hikiji T."/>
            <person name="Kobatake N."/>
            <person name="Inagaki H."/>
            <person name="Ikema Y."/>
            <person name="Okamoto S."/>
            <person name="Okitani R."/>
            <person name="Kawakami T."/>
            <person name="Noguchi S."/>
            <person name="Itoh T."/>
            <person name="Shigeta K."/>
            <person name="Senba T."/>
            <person name="Matsumura K."/>
            <person name="Nakajima Y."/>
            <person name="Mizuno T."/>
            <person name="Morinaga M."/>
            <person name="Sasaki M."/>
            <person name="Togashi T."/>
            <person name="Oyama M."/>
            <person name="Hata H."/>
            <person name="Watanabe M."/>
            <person name="Komatsu T."/>
            <person name="Mizushima-Sugano J."/>
            <person name="Satoh T."/>
            <person name="Shirai Y."/>
            <person name="Takahashi Y."/>
            <person name="Nakagawa K."/>
            <person name="Okumura K."/>
            <person name="Nagase T."/>
            <person name="Nomura N."/>
            <person name="Kikuchi H."/>
            <person name="Masuho Y."/>
            <person name="Yamashita R."/>
            <person name="Nakai K."/>
            <person name="Yada T."/>
            <person name="Nakamura Y."/>
            <person name="Ohara O."/>
            <person name="Isogai T."/>
            <person name="Sugano S."/>
        </authorList>
    </citation>
    <scope>NUCLEOTIDE SEQUENCE [LARGE SCALE MRNA]</scope>
</reference>
<reference key="5">
    <citation type="submission" date="2004-06" db="EMBL/GenBank/DDBJ databases">
        <title>Cloning of human full open reading frames in Gateway(TM) system entry vector (pDONR201).</title>
        <authorList>
            <person name="Ebert L."/>
            <person name="Schick M."/>
            <person name="Neubert P."/>
            <person name="Schatten R."/>
            <person name="Henze S."/>
            <person name="Korn B."/>
        </authorList>
    </citation>
    <scope>NUCLEOTIDE SEQUENCE [LARGE SCALE MRNA]</scope>
</reference>
<reference key="6">
    <citation type="journal article" date="2004" name="Nature">
        <title>The DNA sequence and comparative analysis of human chromosome 5.</title>
        <authorList>
            <person name="Schmutz J."/>
            <person name="Martin J."/>
            <person name="Terry A."/>
            <person name="Couronne O."/>
            <person name="Grimwood J."/>
            <person name="Lowry S."/>
            <person name="Gordon L.A."/>
            <person name="Scott D."/>
            <person name="Xie G."/>
            <person name="Huang W."/>
            <person name="Hellsten U."/>
            <person name="Tran-Gyamfi M."/>
            <person name="She X."/>
            <person name="Prabhakar S."/>
            <person name="Aerts A."/>
            <person name="Altherr M."/>
            <person name="Bajorek E."/>
            <person name="Black S."/>
            <person name="Branscomb E."/>
            <person name="Caoile C."/>
            <person name="Challacombe J.F."/>
            <person name="Chan Y.M."/>
            <person name="Denys M."/>
            <person name="Detter J.C."/>
            <person name="Escobar J."/>
            <person name="Flowers D."/>
            <person name="Fotopulos D."/>
            <person name="Glavina T."/>
            <person name="Gomez M."/>
            <person name="Gonzales E."/>
            <person name="Goodstein D."/>
            <person name="Grigoriev I."/>
            <person name="Groza M."/>
            <person name="Hammon N."/>
            <person name="Hawkins T."/>
            <person name="Haydu L."/>
            <person name="Israni S."/>
            <person name="Jett J."/>
            <person name="Kadner K."/>
            <person name="Kimball H."/>
            <person name="Kobayashi A."/>
            <person name="Lopez F."/>
            <person name="Lou Y."/>
            <person name="Martinez D."/>
            <person name="Medina C."/>
            <person name="Morgan J."/>
            <person name="Nandkeshwar R."/>
            <person name="Noonan J.P."/>
            <person name="Pitluck S."/>
            <person name="Pollard M."/>
            <person name="Predki P."/>
            <person name="Priest J."/>
            <person name="Ramirez L."/>
            <person name="Retterer J."/>
            <person name="Rodriguez A."/>
            <person name="Rogers S."/>
            <person name="Salamov A."/>
            <person name="Salazar A."/>
            <person name="Thayer N."/>
            <person name="Tice H."/>
            <person name="Tsai M."/>
            <person name="Ustaszewska A."/>
            <person name="Vo N."/>
            <person name="Wheeler J."/>
            <person name="Wu K."/>
            <person name="Yang J."/>
            <person name="Dickson M."/>
            <person name="Cheng J.-F."/>
            <person name="Eichler E.E."/>
            <person name="Olsen A."/>
            <person name="Pennacchio L.A."/>
            <person name="Rokhsar D.S."/>
            <person name="Richardson P."/>
            <person name="Lucas S.M."/>
            <person name="Myers R.M."/>
            <person name="Rubin E.M."/>
        </authorList>
    </citation>
    <scope>NUCLEOTIDE SEQUENCE [LARGE SCALE GENOMIC DNA]</scope>
</reference>
<reference key="7">
    <citation type="journal article" date="2004" name="Genome Res.">
        <title>The status, quality, and expansion of the NIH full-length cDNA project: the Mammalian Gene Collection (MGC).</title>
        <authorList>
            <consortium name="The MGC Project Team"/>
        </authorList>
    </citation>
    <scope>NUCLEOTIDE SEQUENCE [LARGE SCALE MRNA]</scope>
    <source>
        <tissue>Muscle</tissue>
        <tissue>Placenta</tissue>
    </source>
</reference>
<reference key="8">
    <citation type="journal article" date="2002" name="Curr. Biol.">
        <title>Directed proteomic analysis of the human nucleolus.</title>
        <authorList>
            <person name="Andersen J.S."/>
            <person name="Lyon C.E."/>
            <person name="Fox A.H."/>
            <person name="Leung A.K.L."/>
            <person name="Lam Y.W."/>
            <person name="Steen H."/>
            <person name="Mann M."/>
            <person name="Lamond A.I."/>
        </authorList>
    </citation>
    <scope>IDENTIFICATION BY MASS SPECTROMETRY</scope>
    <scope>SUBCELLULAR LOCATION</scope>
</reference>
<reference key="9">
    <citation type="journal article" date="2002" name="Mol. Biol. Cell">
        <title>Functional proteomic analysis of human nucleolus.</title>
        <authorList>
            <person name="Scherl A."/>
            <person name="Coute Y."/>
            <person name="Deon C."/>
            <person name="Calle A."/>
            <person name="Kindbeiter K."/>
            <person name="Sanchez J.-C."/>
            <person name="Greco A."/>
            <person name="Hochstrasser D.F."/>
            <person name="Diaz J.-J."/>
        </authorList>
    </citation>
    <scope>SUBCELLULAR LOCATION [LARGE SCALE ANALYSIS]</scope>
    <source>
        <tissue>Cervix carcinoma</tissue>
    </source>
</reference>
<reference key="10">
    <citation type="journal article" date="2004" name="EMBO J.">
        <title>Architecture and assembly of mammalian H/ACA small nucleolar and telomerase ribonucleoproteins.</title>
        <authorList>
            <person name="Wang C."/>
            <person name="Meier U.T."/>
        </authorList>
    </citation>
    <scope>FUNCTION</scope>
    <scope>CHARACTERIZATION OF THE H/ACA SNORNP COMPLEX</scope>
</reference>
<reference key="11">
    <citation type="journal article" date="2009" name="Science">
        <title>A human telomerase holoenzyme protein required for Cajal body localization and telomere synthesis.</title>
        <authorList>
            <person name="Venteicher A.S."/>
            <person name="Abreu E.B."/>
            <person name="Meng Z."/>
            <person name="McCann K.E."/>
            <person name="Terns R.M."/>
            <person name="Veenstra T.D."/>
            <person name="Terns M.P."/>
            <person name="Artandi S.E."/>
        </authorList>
    </citation>
    <scope>IDENTIFICATION IN THE TELOMERASE HOLOENZYME COMPLEX</scope>
</reference>
<reference key="12">
    <citation type="journal article" date="2010" name="Mol. Cell. Biol.">
        <title>Specificity and stoichiometry of subunit interactions in the human telomerase holoenzyme assembled in vivo.</title>
        <authorList>
            <person name="Egan E.D."/>
            <person name="Collins K."/>
        </authorList>
    </citation>
    <scope>IDENTIFICATION IN THE TELOMERASE HOLOENZYME COMPLEX</scope>
</reference>
<reference key="13">
    <citation type="journal article" date="2010" name="Mol. Cell">
        <title>A proteomic screen for nucleolar SUMO targets shows SUMOylation modulates the function of Nop5/Nop58.</title>
        <authorList>
            <person name="Westman B.J."/>
            <person name="Verheggen C."/>
            <person name="Hutten S."/>
            <person name="Lam Y.W."/>
            <person name="Bertrand E."/>
            <person name="Lamond A.I."/>
        </authorList>
    </citation>
    <scope>SUMOYLATION AT LYS-5</scope>
</reference>
<reference key="14">
    <citation type="journal article" date="2010" name="Sci. Signal.">
        <title>Quantitative phosphoproteomics reveals widespread full phosphorylation site occupancy during mitosis.</title>
        <authorList>
            <person name="Olsen J.V."/>
            <person name="Vermeulen M."/>
            <person name="Santamaria A."/>
            <person name="Kumar C."/>
            <person name="Miller M.L."/>
            <person name="Jensen L.J."/>
            <person name="Gnad F."/>
            <person name="Cox J."/>
            <person name="Jensen T.S."/>
            <person name="Nigg E.A."/>
            <person name="Brunak S."/>
            <person name="Mann M."/>
        </authorList>
    </citation>
    <scope>PHOSPHORYLATION [LARGE SCALE ANALYSIS] AT SER-19</scope>
    <scope>IDENTIFICATION BY MASS SPECTROMETRY [LARGE SCALE ANALYSIS]</scope>
    <source>
        <tissue>Cervix carcinoma</tissue>
    </source>
</reference>
<reference key="15">
    <citation type="journal article" date="2011" name="BMC Syst. Biol.">
        <title>Initial characterization of the human central proteome.</title>
        <authorList>
            <person name="Burkard T.R."/>
            <person name="Planyavsky M."/>
            <person name="Kaupe I."/>
            <person name="Breitwieser F.P."/>
            <person name="Buerckstuemmer T."/>
            <person name="Bennett K.L."/>
            <person name="Superti-Furga G."/>
            <person name="Colinge J."/>
        </authorList>
    </citation>
    <scope>IDENTIFICATION BY MASS SPECTROMETRY [LARGE SCALE ANALYSIS]</scope>
</reference>
<reference key="16">
    <citation type="journal article" date="2012" name="Proc. Natl. Acad. Sci. U.S.A.">
        <title>N-terminal acetylome analyses and functional insights of the N-terminal acetyltransferase NatB.</title>
        <authorList>
            <person name="Van Damme P."/>
            <person name="Lasa M."/>
            <person name="Polevoda B."/>
            <person name="Gazquez C."/>
            <person name="Elosegui-Artola A."/>
            <person name="Kim D.S."/>
            <person name="De Juan-Pardo E."/>
            <person name="Demeyer K."/>
            <person name="Hole K."/>
            <person name="Larrea E."/>
            <person name="Timmerman E."/>
            <person name="Prieto J."/>
            <person name="Arnesen T."/>
            <person name="Sherman F."/>
            <person name="Gevaert K."/>
            <person name="Aldabe R."/>
        </authorList>
    </citation>
    <scope>IDENTIFICATION BY MASS SPECTROMETRY [LARGE SCALE ANALYSIS]</scope>
</reference>
<reference key="17">
    <citation type="journal article" date="2014" name="J. Proteomics">
        <title>An enzyme assisted RP-RPLC approach for in-depth analysis of human liver phosphoproteome.</title>
        <authorList>
            <person name="Bian Y."/>
            <person name="Song C."/>
            <person name="Cheng K."/>
            <person name="Dong M."/>
            <person name="Wang F."/>
            <person name="Huang J."/>
            <person name="Sun D."/>
            <person name="Wang L."/>
            <person name="Ye M."/>
            <person name="Zou H."/>
        </authorList>
    </citation>
    <scope>IDENTIFICATION BY MASS SPECTROMETRY [LARGE SCALE ANALYSIS]</scope>
    <source>
        <tissue>Liver</tissue>
    </source>
</reference>
<reference key="18">
    <citation type="journal article" date="2014" name="Nat. Struct. Mol. Biol.">
        <title>Uncovering global SUMOylation signaling networks in a site-specific manner.</title>
        <authorList>
            <person name="Hendriks I.A."/>
            <person name="D'Souza R.C."/>
            <person name="Yang B."/>
            <person name="Verlaan-de Vries M."/>
            <person name="Mann M."/>
            <person name="Vertegaal A.C."/>
        </authorList>
    </citation>
    <scope>SUMOYLATION [LARGE SCALE ANALYSIS] AT LYS-5</scope>
    <scope>IDENTIFICATION BY MASS SPECTROMETRY [LARGE SCALE ANALYSIS]</scope>
</reference>
<reference key="19">
    <citation type="journal article" date="2014" name="Proc. Natl. Acad. Sci. U.S.A.">
        <title>Mapping of SUMO sites and analysis of SUMOylation changes induced by external stimuli.</title>
        <authorList>
            <person name="Impens F."/>
            <person name="Radoshevich L."/>
            <person name="Cossart P."/>
            <person name="Ribet D."/>
        </authorList>
    </citation>
    <scope>SUMOYLATION [LARGE SCALE ANALYSIS] AT LYS-5</scope>
    <scope>IDENTIFICATION BY MASS SPECTROMETRY [LARGE SCALE ANALYSIS]</scope>
</reference>
<reference key="20">
    <citation type="journal article" date="2015" name="Cell Rep.">
        <title>SUMO-2 orchestrates chromatin modifiers in response to DNA damage.</title>
        <authorList>
            <person name="Hendriks I.A."/>
            <person name="Treffers L.W."/>
            <person name="Verlaan-de Vries M."/>
            <person name="Olsen J.V."/>
            <person name="Vertegaal A.C."/>
        </authorList>
    </citation>
    <scope>SUMOYLATION [LARGE SCALE ANALYSIS] AT LYS-5</scope>
    <scope>IDENTIFICATION BY MASS SPECTROMETRY [LARGE SCALE ANALYSIS]</scope>
</reference>
<reference key="21">
    <citation type="journal article" date="2015" name="Mol. Cell. Proteomics">
        <title>System-wide analysis of SUMOylation dynamics in response to replication stress reveals novel small ubiquitin-like modified target proteins and acceptor lysines relevant for genome stability.</title>
        <authorList>
            <person name="Xiao Z."/>
            <person name="Chang J.G."/>
            <person name="Hendriks I.A."/>
            <person name="Sigurdsson J.O."/>
            <person name="Olsen J.V."/>
            <person name="Vertegaal A.C."/>
        </authorList>
    </citation>
    <scope>SUMOYLATION [LARGE SCALE ANALYSIS] AT LYS-5</scope>
    <scope>IDENTIFICATION BY MASS SPECTROMETRY [LARGE SCALE ANALYSIS]</scope>
</reference>
<reference key="22">
    <citation type="journal article" date="2017" name="Nat. Struct. Mol. Biol.">
        <title>Site-specific mapping of the human SUMO proteome reveals co-modification with phosphorylation.</title>
        <authorList>
            <person name="Hendriks I.A."/>
            <person name="Lyon D."/>
            <person name="Young C."/>
            <person name="Jensen L.J."/>
            <person name="Vertegaal A.C."/>
            <person name="Nielsen M.L."/>
        </authorList>
    </citation>
    <scope>SUMOYLATION [LARGE SCALE ANALYSIS] AT LYS-3 AND LYS-5</scope>
    <scope>IDENTIFICATION BY MASS SPECTROMETRY [LARGE SCALE ANALYSIS]</scope>
</reference>
<reference key="23">
    <citation type="journal article" date="2018" name="Nature">
        <title>Cryo-EM structure of substrate-bound human telomerase holoenzyme.</title>
        <authorList>
            <person name="Nguyen T.H.D."/>
            <person name="Tam J."/>
            <person name="Wu R.A."/>
            <person name="Greber B.J."/>
            <person name="Toso D."/>
            <person name="Nogales E."/>
            <person name="Collins K."/>
        </authorList>
    </citation>
    <scope>STRUCTURE BY ELECTRON MICROSCOPY (7.7 ANGSTROMS) OF THE TELOMERASE HOLOENZYME COMPLEX</scope>
</reference>
<reference key="24">
    <citation type="journal article" date="2008" name="Proc. Natl. Acad. Sci. U.S.A.">
        <title>Mutations in the telomerase component NHP2 cause the premature ageing syndrome dyskeratosis congenita.</title>
        <authorList>
            <person name="Vulliamy T."/>
            <person name="Beswick R."/>
            <person name="Kirwan M."/>
            <person name="Marrone A."/>
            <person name="Digweed M."/>
            <person name="Walne A."/>
            <person name="Dokal I."/>
        </authorList>
    </citation>
    <scope>VARIANTS DKCB2 MET-126 AND HIS-139</scope>
    <scope>VARIANT THR-118</scope>
</reference>
<keyword id="KW-0002">3D-structure</keyword>
<keyword id="KW-0225">Disease variant</keyword>
<keyword id="KW-1011">Dyskeratosis congenita</keyword>
<keyword id="KW-1017">Isopeptide bond</keyword>
<keyword id="KW-0539">Nucleus</keyword>
<keyword id="KW-0597">Phosphoprotein</keyword>
<keyword id="KW-1267">Proteomics identification</keyword>
<keyword id="KW-1185">Reference proteome</keyword>
<keyword id="KW-0687">Ribonucleoprotein</keyword>
<keyword id="KW-0690">Ribosome biogenesis</keyword>
<keyword id="KW-0694">RNA-binding</keyword>
<keyword id="KW-0698">rRNA processing</keyword>
<keyword id="KW-0832">Ubl conjugation</keyword>
<protein>
    <recommendedName>
        <fullName>H/ACA ribonucleoprotein complex subunit 2</fullName>
    </recommendedName>
    <alternativeName>
        <fullName>Nucleolar protein family A member 2</fullName>
    </alternativeName>
    <alternativeName>
        <fullName>snoRNP protein NHP2</fullName>
    </alternativeName>
</protein>
<sequence length="153" mass="17201">MTKIKADPDGPEAQAEACSGERTYQELLVNQNPIAQPLASRRLTRKLYKCIKKAVKQKQIRRGVKEVQKFVNKGEKGIMVLAGDTLPIEVYCHLPVMCEDRNLPYVYIPSKTDLGAAAGSKRPTCVIMVKPHEEYQEAYDECLEEVQSLPLPL</sequence>
<dbReference type="EMBL" id="AJ293309">
    <property type="protein sequence ID" value="CAC08452.1"/>
    <property type="molecule type" value="mRNA"/>
</dbReference>
<dbReference type="EMBL" id="AF401219">
    <property type="protein sequence ID" value="AAL02175.1"/>
    <property type="molecule type" value="mRNA"/>
</dbReference>
<dbReference type="EMBL" id="AF161404">
    <property type="protein sequence ID" value="AAF28964.1"/>
    <property type="status" value="ALT_FRAME"/>
    <property type="molecule type" value="mRNA"/>
</dbReference>
<dbReference type="EMBL" id="AK000486">
    <property type="protein sequence ID" value="BAA91198.1"/>
    <property type="molecule type" value="mRNA"/>
</dbReference>
<dbReference type="EMBL" id="CR457238">
    <property type="protein sequence ID" value="CAG33519.1"/>
    <property type="molecule type" value="mRNA"/>
</dbReference>
<dbReference type="EMBL" id="AC136632">
    <property type="status" value="NOT_ANNOTATED_CDS"/>
    <property type="molecule type" value="Genomic_DNA"/>
</dbReference>
<dbReference type="EMBL" id="BC000009">
    <property type="protein sequence ID" value="AAH00009.1"/>
    <property type="molecule type" value="mRNA"/>
</dbReference>
<dbReference type="EMBL" id="BC006387">
    <property type="protein sequence ID" value="AAH06387.1"/>
    <property type="molecule type" value="mRNA"/>
</dbReference>
<dbReference type="CCDS" id="CCDS4432.1"/>
<dbReference type="RefSeq" id="NP_001030005.1">
    <property type="nucleotide sequence ID" value="NM_001034833.1"/>
</dbReference>
<dbReference type="RefSeq" id="NP_060308.1">
    <property type="nucleotide sequence ID" value="NM_017838.4"/>
</dbReference>
<dbReference type="PDB" id="7BGB">
    <property type="method" value="EM"/>
    <property type="resolution" value="3.39 A"/>
    <property type="chains" value="E/I=1-153"/>
</dbReference>
<dbReference type="PDB" id="7TRC">
    <property type="method" value="EM"/>
    <property type="resolution" value="3.30 A"/>
    <property type="chains" value="E/I=1-153"/>
</dbReference>
<dbReference type="PDB" id="7V9A">
    <property type="method" value="EM"/>
    <property type="resolution" value="3.94 A"/>
    <property type="chains" value="E/I=1-153"/>
</dbReference>
<dbReference type="PDB" id="8OUE">
    <property type="method" value="EM"/>
    <property type="resolution" value="2.70 A"/>
    <property type="chains" value="E/I=1-153"/>
</dbReference>
<dbReference type="PDB" id="8OUF">
    <property type="method" value="EM"/>
    <property type="resolution" value="3.10 A"/>
    <property type="chains" value="E/I=1-153"/>
</dbReference>
<dbReference type="PDBsum" id="7BGB"/>
<dbReference type="PDBsum" id="7TRC"/>
<dbReference type="PDBsum" id="7V9A"/>
<dbReference type="PDBsum" id="8OUE"/>
<dbReference type="PDBsum" id="8OUF"/>
<dbReference type="EMDB" id="EMD-12177"/>
<dbReference type="EMDB" id="EMD-17190"/>
<dbReference type="EMDB" id="EMD-17191"/>
<dbReference type="EMDB" id="EMD-26085"/>
<dbReference type="EMDB" id="EMD-31813"/>
<dbReference type="EMDB" id="EMD-31814"/>
<dbReference type="SMR" id="Q9NX24"/>
<dbReference type="BioGRID" id="120783">
    <property type="interactions" value="145"/>
</dbReference>
<dbReference type="ComplexPortal" id="CPX-265">
    <property type="entry name" value="Telomerase holoenzyme complex"/>
</dbReference>
<dbReference type="CORUM" id="Q9NX24"/>
<dbReference type="FunCoup" id="Q9NX24">
    <property type="interactions" value="1642"/>
</dbReference>
<dbReference type="IntAct" id="Q9NX24">
    <property type="interactions" value="42"/>
</dbReference>
<dbReference type="MINT" id="Q9NX24"/>
<dbReference type="STRING" id="9606.ENSP00000274606"/>
<dbReference type="GlyGen" id="Q9NX24">
    <property type="glycosylation" value="1 site, 1 O-linked glycan (1 site)"/>
</dbReference>
<dbReference type="iPTMnet" id="Q9NX24"/>
<dbReference type="PhosphoSitePlus" id="Q9NX24"/>
<dbReference type="SwissPalm" id="Q9NX24"/>
<dbReference type="BioMuta" id="NHP2"/>
<dbReference type="DMDM" id="68565945"/>
<dbReference type="jPOST" id="Q9NX24"/>
<dbReference type="MassIVE" id="Q9NX24"/>
<dbReference type="PaxDb" id="9606-ENSP00000274606"/>
<dbReference type="PeptideAtlas" id="Q9NX24"/>
<dbReference type="ProteomicsDB" id="83025"/>
<dbReference type="Pumba" id="Q9NX24"/>
<dbReference type="Antibodypedia" id="46084">
    <property type="antibodies" value="100 antibodies from 26 providers"/>
</dbReference>
<dbReference type="DNASU" id="55651"/>
<dbReference type="Ensembl" id="ENST00000274606.8">
    <property type="protein sequence ID" value="ENSP00000274606.4"/>
    <property type="gene ID" value="ENSG00000145912.10"/>
</dbReference>
<dbReference type="GeneID" id="55651"/>
<dbReference type="KEGG" id="hsa:55651"/>
<dbReference type="MANE-Select" id="ENST00000274606.8">
    <property type="protein sequence ID" value="ENSP00000274606.4"/>
    <property type="RefSeq nucleotide sequence ID" value="NM_017838.4"/>
    <property type="RefSeq protein sequence ID" value="NP_060308.1"/>
</dbReference>
<dbReference type="UCSC" id="uc003mir.4">
    <property type="organism name" value="human"/>
</dbReference>
<dbReference type="AGR" id="HGNC:14377"/>
<dbReference type="CTD" id="55651"/>
<dbReference type="DisGeNET" id="55651"/>
<dbReference type="GeneCards" id="NHP2"/>
<dbReference type="GeneReviews" id="NHP2"/>
<dbReference type="HGNC" id="HGNC:14377">
    <property type="gene designation" value="NHP2"/>
</dbReference>
<dbReference type="HPA" id="ENSG00000145912">
    <property type="expression patterns" value="Low tissue specificity"/>
</dbReference>
<dbReference type="MalaCards" id="NHP2"/>
<dbReference type="MIM" id="606470">
    <property type="type" value="gene"/>
</dbReference>
<dbReference type="MIM" id="613987">
    <property type="type" value="phenotype"/>
</dbReference>
<dbReference type="neXtProt" id="NX_Q9NX24"/>
<dbReference type="OpenTargets" id="ENSG00000145912"/>
<dbReference type="Orphanet" id="1775">
    <property type="disease" value="Dyskeratosis congenita"/>
</dbReference>
<dbReference type="PharmGKB" id="PA164723898"/>
<dbReference type="VEuPathDB" id="HostDB:ENSG00000145912"/>
<dbReference type="eggNOG" id="KOG3167">
    <property type="taxonomic scope" value="Eukaryota"/>
</dbReference>
<dbReference type="GeneTree" id="ENSGT00550000074939"/>
<dbReference type="HOGENOM" id="CLU_084513_1_0_1"/>
<dbReference type="InParanoid" id="Q9NX24"/>
<dbReference type="OMA" id="EDNYEAR"/>
<dbReference type="OrthoDB" id="5364946at2759"/>
<dbReference type="PAN-GO" id="Q9NX24">
    <property type="GO annotations" value="6 GO annotations based on evolutionary models"/>
</dbReference>
<dbReference type="PhylomeDB" id="Q9NX24"/>
<dbReference type="TreeFam" id="TF105839"/>
<dbReference type="PathwayCommons" id="Q9NX24"/>
<dbReference type="Reactome" id="R-HSA-171319">
    <property type="pathway name" value="Telomere Extension By Telomerase"/>
</dbReference>
<dbReference type="Reactome" id="R-HSA-6790901">
    <property type="pathway name" value="rRNA modification in the nucleus and cytosol"/>
</dbReference>
<dbReference type="SignaLink" id="Q9NX24"/>
<dbReference type="SIGNOR" id="Q9NX24"/>
<dbReference type="BioGRID-ORCS" id="55651">
    <property type="hits" value="759 hits in 1127 CRISPR screens"/>
</dbReference>
<dbReference type="CD-CODE" id="91857CE7">
    <property type="entry name" value="Nucleolus"/>
</dbReference>
<dbReference type="ChiTaRS" id="NHP2">
    <property type="organism name" value="human"/>
</dbReference>
<dbReference type="GeneWiki" id="NOLA2"/>
<dbReference type="GenomeRNAi" id="55651"/>
<dbReference type="Pharos" id="Q9NX24">
    <property type="development level" value="Tbio"/>
</dbReference>
<dbReference type="PRO" id="PR:Q9NX24"/>
<dbReference type="Proteomes" id="UP000005640">
    <property type="component" value="Chromosome 5"/>
</dbReference>
<dbReference type="RNAct" id="Q9NX24">
    <property type="molecule type" value="protein"/>
</dbReference>
<dbReference type="Bgee" id="ENSG00000145912">
    <property type="expression patterns" value="Expressed in esophagus squamous epithelium and 203 other cell types or tissues"/>
</dbReference>
<dbReference type="ExpressionAtlas" id="Q9NX24">
    <property type="expression patterns" value="baseline and differential"/>
</dbReference>
<dbReference type="GO" id="GO:0072589">
    <property type="term" value="C:box H/ACA scaRNP complex"/>
    <property type="evidence" value="ECO:0000304"/>
    <property type="project" value="BHF-UCL"/>
</dbReference>
<dbReference type="GO" id="GO:0031429">
    <property type="term" value="C:box H/ACA snoRNP complex"/>
    <property type="evidence" value="ECO:0000314"/>
    <property type="project" value="BHF-UCL"/>
</dbReference>
<dbReference type="GO" id="GO:0090661">
    <property type="term" value="C:box H/ACA telomerase RNP complex"/>
    <property type="evidence" value="ECO:0000314"/>
    <property type="project" value="BHF-UCL"/>
</dbReference>
<dbReference type="GO" id="GO:0000781">
    <property type="term" value="C:chromosome, telomeric region"/>
    <property type="evidence" value="ECO:0007005"/>
    <property type="project" value="BHF-UCL"/>
</dbReference>
<dbReference type="GO" id="GO:0005654">
    <property type="term" value="C:nucleoplasm"/>
    <property type="evidence" value="ECO:0000304"/>
    <property type="project" value="Reactome"/>
</dbReference>
<dbReference type="GO" id="GO:0005732">
    <property type="term" value="C:sno(s)RNA-containing ribonucleoprotein complex"/>
    <property type="evidence" value="ECO:0000250"/>
    <property type="project" value="UniProtKB"/>
</dbReference>
<dbReference type="GO" id="GO:0005697">
    <property type="term" value="C:telomerase holoenzyme complex"/>
    <property type="evidence" value="ECO:0000314"/>
    <property type="project" value="UniProtKB"/>
</dbReference>
<dbReference type="GO" id="GO:0034513">
    <property type="term" value="F:box H/ACA snoRNA binding"/>
    <property type="evidence" value="ECO:0000353"/>
    <property type="project" value="BHF-UCL"/>
</dbReference>
<dbReference type="GO" id="GO:0003730">
    <property type="term" value="F:mRNA 3'-UTR binding"/>
    <property type="evidence" value="ECO:0007669"/>
    <property type="project" value="Ensembl"/>
</dbReference>
<dbReference type="GO" id="GO:0003723">
    <property type="term" value="F:RNA binding"/>
    <property type="evidence" value="ECO:0000353"/>
    <property type="project" value="BHF-UCL"/>
</dbReference>
<dbReference type="GO" id="GO:0070034">
    <property type="term" value="F:telomerase RNA binding"/>
    <property type="evidence" value="ECO:0000353"/>
    <property type="project" value="BHF-UCL"/>
</dbReference>
<dbReference type="GO" id="GO:0034511">
    <property type="term" value="F:U3 snoRNA binding"/>
    <property type="evidence" value="ECO:0007669"/>
    <property type="project" value="Ensembl"/>
</dbReference>
<dbReference type="GO" id="GO:0031118">
    <property type="term" value="P:rRNA pseudouridine synthesis"/>
    <property type="evidence" value="ECO:0000250"/>
    <property type="project" value="UniProtKB"/>
</dbReference>
<dbReference type="GO" id="GO:0000454">
    <property type="term" value="P:snoRNA guided rRNA pseudouridine synthesis"/>
    <property type="evidence" value="ECO:0007669"/>
    <property type="project" value="Ensembl"/>
</dbReference>
<dbReference type="GO" id="GO:0031120">
    <property type="term" value="P:snRNA pseudouridine synthesis"/>
    <property type="evidence" value="ECO:0000318"/>
    <property type="project" value="GO_Central"/>
</dbReference>
<dbReference type="GO" id="GO:0090671">
    <property type="term" value="P:telomerase RNA localization to Cajal body"/>
    <property type="evidence" value="ECO:0007001"/>
    <property type="project" value="BHF-UCL"/>
</dbReference>
<dbReference type="GO" id="GO:0007004">
    <property type="term" value="P:telomere maintenance via telomerase"/>
    <property type="evidence" value="ECO:0000314"/>
    <property type="project" value="UniProtKB"/>
</dbReference>
<dbReference type="FunFam" id="3.30.1330.30:FF:000016">
    <property type="entry name" value="H/ACA ribonucleoprotein complex subunit 2"/>
    <property type="match status" value="1"/>
</dbReference>
<dbReference type="Gene3D" id="3.30.1330.30">
    <property type="match status" value="1"/>
</dbReference>
<dbReference type="InterPro" id="IPR050257">
    <property type="entry name" value="eL8/uL1-like"/>
</dbReference>
<dbReference type="InterPro" id="IPR002415">
    <property type="entry name" value="H/ACA_rnp_Nhp2-like"/>
</dbReference>
<dbReference type="InterPro" id="IPR029064">
    <property type="entry name" value="Ribosomal_eL30-like_sf"/>
</dbReference>
<dbReference type="InterPro" id="IPR004038">
    <property type="entry name" value="Ribosomal_eL8/eL30/eS12/Gad45"/>
</dbReference>
<dbReference type="InterPro" id="IPR018492">
    <property type="entry name" value="Ribosomal_eL8/Nhp2"/>
</dbReference>
<dbReference type="PANTHER" id="PTHR23105">
    <property type="entry name" value="RIBOSOMAL PROTEIN L7AE FAMILY MEMBER"/>
    <property type="match status" value="1"/>
</dbReference>
<dbReference type="Pfam" id="PF01248">
    <property type="entry name" value="Ribosomal_L7Ae"/>
    <property type="match status" value="1"/>
</dbReference>
<dbReference type="PRINTS" id="PR00881">
    <property type="entry name" value="L7ARS6FAMILY"/>
</dbReference>
<dbReference type="PRINTS" id="PR00883">
    <property type="entry name" value="NUCLEARHMG"/>
</dbReference>
<dbReference type="SUPFAM" id="SSF55315">
    <property type="entry name" value="L30e-like"/>
    <property type="match status" value="1"/>
</dbReference>
<gene>
    <name type="primary">NHP2</name>
    <name type="synonym">NOLA2</name>
    <name type="ORF">HSPC286</name>
</gene>
<feature type="chain" id="PRO_0000136763" description="H/ACA ribonucleoprotein complex subunit 2">
    <location>
        <begin position="1"/>
        <end position="153"/>
    </location>
</feature>
<feature type="modified residue" description="Phosphoserine" evidence="9">
    <location>
        <position position="19"/>
    </location>
</feature>
<feature type="cross-link" description="Glycyl lysine isopeptide (Lys-Gly) (interchain with G-Cter in SUMO2)" evidence="14">
    <location>
        <position position="3"/>
    </location>
</feature>
<feature type="cross-link" description="Glycyl lysine isopeptide (Lys-Gly) (interchain with G-Cter in SUMO); alternate">
    <location>
        <position position="5"/>
    </location>
</feature>
<feature type="cross-link" description="Glycyl lysine isopeptide (Lys-Gly) (interchain with G-Cter in SUMO1); alternate" evidence="10">
    <location>
        <position position="5"/>
    </location>
</feature>
<feature type="cross-link" description="Glycyl lysine isopeptide (Lys-Gly) (interchain with G-Cter in SUMO2); alternate" evidence="10 11 12 13 14">
    <location>
        <position position="5"/>
    </location>
</feature>
<feature type="sequence variant" id="VAR_065870" description="In dbSNP:rs139588879." evidence="4">
    <original>A</original>
    <variation>T</variation>
    <location>
        <position position="118"/>
    </location>
</feature>
<feature type="sequence variant" id="VAR_065871" description="In DKCB2; dbSNP:rs121908090." evidence="4">
    <original>V</original>
    <variation>M</variation>
    <location>
        <position position="126"/>
    </location>
</feature>
<feature type="sequence variant" id="VAR_065872" description="In DKCB2; dbSNP:rs121908089." evidence="4">
    <original>Y</original>
    <variation>H</variation>
    <location>
        <position position="139"/>
    </location>
</feature>
<feature type="helix" evidence="15">
    <location>
        <begin position="41"/>
        <end position="55"/>
    </location>
</feature>
<feature type="turn" evidence="15">
    <location>
        <begin position="56"/>
        <end position="58"/>
    </location>
</feature>
<feature type="strand" evidence="15">
    <location>
        <begin position="60"/>
        <end position="63"/>
    </location>
</feature>
<feature type="helix" evidence="15">
    <location>
        <begin position="64"/>
        <end position="72"/>
    </location>
</feature>
<feature type="strand" evidence="15">
    <location>
        <begin position="78"/>
        <end position="82"/>
    </location>
</feature>
<feature type="helix" evidence="15">
    <location>
        <begin position="88"/>
        <end position="90"/>
    </location>
</feature>
<feature type="turn" evidence="15">
    <location>
        <begin position="91"/>
        <end position="93"/>
    </location>
</feature>
<feature type="helix" evidence="15">
    <location>
        <begin position="94"/>
        <end position="99"/>
    </location>
</feature>
<feature type="turn" evidence="15">
    <location>
        <begin position="100"/>
        <end position="102"/>
    </location>
</feature>
<feature type="strand" evidence="15">
    <location>
        <begin position="105"/>
        <end position="109"/>
    </location>
</feature>
<feature type="helix" evidence="15">
    <location>
        <begin position="112"/>
        <end position="118"/>
    </location>
</feature>
<feature type="strand" evidence="15">
    <location>
        <begin position="125"/>
        <end position="129"/>
    </location>
</feature>
<feature type="helix" evidence="15">
    <location>
        <begin position="133"/>
        <end position="135"/>
    </location>
</feature>
<feature type="helix" evidence="15">
    <location>
        <begin position="136"/>
        <end position="147"/>
    </location>
</feature>
<accession>Q9NX24</accession>
<accession>A6NKY8</accession>
<accession>Q9P095</accession>
<evidence type="ECO:0000269" key="1">
    <source>
    </source>
</evidence>
<evidence type="ECO:0000269" key="2">
    <source>
    </source>
</evidence>
<evidence type="ECO:0000269" key="3">
    <source>
    </source>
</evidence>
<evidence type="ECO:0000269" key="4">
    <source>
    </source>
</evidence>
<evidence type="ECO:0000269" key="5">
    <source>
    </source>
</evidence>
<evidence type="ECO:0000269" key="6">
    <source>
    </source>
</evidence>
<evidence type="ECO:0000269" key="7">
    <source>
    </source>
</evidence>
<evidence type="ECO:0000305" key="8"/>
<evidence type="ECO:0007744" key="9">
    <source>
    </source>
</evidence>
<evidence type="ECO:0007744" key="10">
    <source>
    </source>
</evidence>
<evidence type="ECO:0007744" key="11">
    <source>
    </source>
</evidence>
<evidence type="ECO:0007744" key="12">
    <source>
    </source>
</evidence>
<evidence type="ECO:0007744" key="13">
    <source>
    </source>
</evidence>
<evidence type="ECO:0007744" key="14">
    <source>
    </source>
</evidence>
<evidence type="ECO:0007829" key="15">
    <source>
        <dbReference type="PDB" id="7TRC"/>
    </source>
</evidence>
<proteinExistence type="evidence at protein level"/>
<organism>
    <name type="scientific">Homo sapiens</name>
    <name type="common">Human</name>
    <dbReference type="NCBI Taxonomy" id="9606"/>
    <lineage>
        <taxon>Eukaryota</taxon>
        <taxon>Metazoa</taxon>
        <taxon>Chordata</taxon>
        <taxon>Craniata</taxon>
        <taxon>Vertebrata</taxon>
        <taxon>Euteleostomi</taxon>
        <taxon>Mammalia</taxon>
        <taxon>Eutheria</taxon>
        <taxon>Euarchontoglires</taxon>
        <taxon>Primates</taxon>
        <taxon>Haplorrhini</taxon>
        <taxon>Catarrhini</taxon>
        <taxon>Hominidae</taxon>
        <taxon>Homo</taxon>
    </lineage>
</organism>
<name>NHP2_HUMAN</name>
<comment type="function">
    <text evidence="3">Required for ribosome biogenesis and telomere maintenance. Part of the H/ACA small nucleolar ribonucleoprotein (H/ACA snoRNP) complex, which catalyzes pseudouridylation of rRNA. This involves the isomerization of uridine such that the ribose is subsequently attached to C5, instead of the normal N1. Each rRNA can contain up to 100 pseudouridine ('psi') residues, which may serve to stabilize the conformation of rRNAs. May also be required for correct processing or intranuclear trafficking of TERC, the RNA component of the telomerase reverse transcriptase (TERT) holoenzyme.</text>
</comment>
<comment type="subunit">
    <text evidence="1 5 6 7">Part of the H/ACA small nucleolar ribonucleoprotein (H/ACA snoRNP) complex, which contains NHP2/NOLA2, GAR1/NOLA1, NOP10/NOLA3, and DKC1/NOLA4, which is presumed to be the catalytic subunit (PubMed:11074001). The complex contains a stable core formed by binding of one or two NOP10-DKC1 heterodimers to NHP2; GAR1 subsequently binds to this core via DKC1 (PubMed:11074001). The complex binds a box H/ACA small nucleolar RNA (snoRNA), which may target the specific site of modification within the RNA substrate (PubMed:11074001). During assembly, the complex contains NAF1 instead of GAR1/NOLA1 (PubMed:11074001). The complex also interacts with TERC, which contains a 3'-terminal domain related to the box H/ACA snoRNAs (PubMed:11074001). Specific interactions with snoRNAs or TERC are mediated by GAR1 and NHP2. Associates with NOLC1/NOPP140 (PubMed:11074001). H/ACA snoRNPs interact with the SMN complex, consisting of SMN1 or SMN2, GEMIN2/SIP1, DDX20/GEMIN3, and GEMIN4. This is mediated by interaction between GAR1 and SMN1 or SMN2 (PubMed:11074001). The SMN complex may be required for correct assembly of the H/ACA snoRNP complex (PubMed:11074001). Component of the telomerase holoenzyme complex composed of one molecule of TERT, one molecule of WRAP53/TCAB1, two molecules of H/ACA ribonucleoprotein complex subunits DKC1, NOP10, NHP2 and GAR1, and a telomerase RNA template component (TERC) (PubMed:19179534, PubMed:20351177, PubMed:29695869). The telomerase holoenzyme complex is associated with TEP1, SMG6/EST1A and POT1 (PubMed:19179534).</text>
</comment>
<comment type="interaction">
    <interactant intactId="EBI-1050064">
        <id>Q9NX24</id>
    </interactant>
    <interactant intactId="EBI-466029">
        <id>P42858</id>
        <label>HTT</label>
    </interactant>
    <organismsDiffer>false</organismsDiffer>
    <experiments>3</experiments>
</comment>
<comment type="interaction">
    <interactant intactId="EBI-1050064">
        <id>Q9NX24</id>
    </interactant>
    <interactant intactId="EBI-1642169">
        <id>Q9NPE3</id>
        <label>NOP10</label>
    </interactant>
    <organismsDiffer>false</organismsDiffer>
    <experiments>12</experiments>
</comment>
<comment type="subcellular location">
    <subcellularLocation>
        <location>Nucleus</location>
        <location>Nucleolus</location>
    </subcellularLocation>
    <subcellularLocation>
        <location>Nucleus</location>
        <location>Cajal body</location>
    </subcellularLocation>
    <text>Also localized to Cajal bodies (coiled bodies).</text>
</comment>
<comment type="tissue specificity">
    <text evidence="2">Expressed in brain, colon, heart, kidney, ovary, pancreas, placenta, prostate, skeletal muscle, small intestine, spleen, testis and thymus. Also expressed at lower levels in the liver.</text>
</comment>
<comment type="developmental stage">
    <text evidence="2">Transcript peaks at G1/S transition.</text>
</comment>
<comment type="disease" evidence="4">
    <disease id="DI-03167">
        <name>Dyskeratosis congenita, autosomal recessive, 2</name>
        <acronym>DKCB2</acronym>
        <description>A rare multisystem disorder caused by defective telomere maintenance. It is characterized by progressive bone marrow failure, and the clinical triad of reticulated skin hyperpigmentation, nail dystrophy, and mucosal leukoplakia. Common but variable features include premature graying, aplastic anemia, low platelets, osteoporosis, pulmonary fibrosis, and liver fibrosis among others. Early mortality is often associated with bone marrow failure, infections, fatal pulmonary complications, or malignancy.</description>
        <dbReference type="MIM" id="613987"/>
    </disease>
    <text>The disease is caused by variants affecting the gene represented in this entry.</text>
</comment>
<comment type="similarity">
    <text evidence="8">Belongs to the eukaryotic ribosomal protein eL8 family.</text>
</comment>
<comment type="sequence caution" evidence="8">
    <conflict type="frameshift">
        <sequence resource="EMBL-CDS" id="AAF28964"/>
    </conflict>
</comment>